<keyword id="KW-0903">Direct protein sequencing</keyword>
<keyword id="KW-0382">Hypotensive agent</keyword>
<keyword id="KW-0481">Metalloenzyme inhibitor</keyword>
<keyword id="KW-0483">Metalloprotease inhibitor</keyword>
<keyword id="KW-0646">Protease inhibitor</keyword>
<keyword id="KW-0873">Pyrrolidone carboxylic acid</keyword>
<keyword id="KW-0964">Secreted</keyword>
<keyword id="KW-0800">Toxin</keyword>
<protein>
    <recommendedName>
        <fullName>Bradykinin-potentiating peptide 10d</fullName>
        <shortName>BPP-10d</shortName>
    </recommendedName>
</protein>
<reference key="1">
    <citation type="journal article" date="2012" name="Mol. Cell. Proteomics">
        <title>Peptidomics of three Bothrops snake venoms: insights into the molecular diversification of proteomes and peptidomes.</title>
        <authorList>
            <person name="Tashima A.K."/>
            <person name="Zelanis A."/>
            <person name="Kitano E.S."/>
            <person name="Ianzer D."/>
            <person name="Melo R.L."/>
            <person name="Rioli V."/>
            <person name="Sant'anna S.S."/>
            <person name="Schenberg A.C."/>
            <person name="Camargo A.C."/>
            <person name="Serrano S.M.T."/>
        </authorList>
    </citation>
    <scope>PROTEIN SEQUENCE</scope>
    <scope>SYNTHESIS</scope>
    <scope>FUNCTION</scope>
    <scope>PYROGLUTAMATE FORMATION AT GLN-1</scope>
    <scope>MASS SPECTROMETRY</scope>
    <source>
        <tissue>Venom</tissue>
    </source>
</reference>
<comment type="function">
    <text evidence="1">This peptide evokes slight hypotension (-2 mmHg), when injected alone into rats. It has a no bradykinin-potentiating effect, when 60 nmol of BPP-10d are coinjected with 0.5 ug of bradykinin into rats. It inhibits angiotensin converting enzyme (ACE) activity with a K(i)app of 9.12 uM.</text>
</comment>
<comment type="subcellular location">
    <subcellularLocation>
        <location>Secreted</location>
    </subcellularLocation>
</comment>
<comment type="tissue specificity">
    <text>Expressed by the venom gland.</text>
</comment>
<comment type="mass spectrometry" mass="1182.7" method="Electrospray" evidence="1"/>
<comment type="similarity">
    <text evidence="2">Belongs to the bradykinin-potentiating peptide family.</text>
</comment>
<accession>P0DJK5</accession>
<dbReference type="GO" id="GO:0005576">
    <property type="term" value="C:extracellular region"/>
    <property type="evidence" value="ECO:0007669"/>
    <property type="project" value="UniProtKB-SubCell"/>
</dbReference>
<dbReference type="GO" id="GO:0030414">
    <property type="term" value="F:peptidase inhibitor activity"/>
    <property type="evidence" value="ECO:0007669"/>
    <property type="project" value="UniProtKB-KW"/>
</dbReference>
<dbReference type="GO" id="GO:0090729">
    <property type="term" value="F:toxin activity"/>
    <property type="evidence" value="ECO:0007669"/>
    <property type="project" value="UniProtKB-KW"/>
</dbReference>
<dbReference type="GO" id="GO:0008217">
    <property type="term" value="P:regulation of blood pressure"/>
    <property type="evidence" value="ECO:0007669"/>
    <property type="project" value="UniProtKB-KW"/>
</dbReference>
<organism>
    <name type="scientific">Bothrops fonsecai</name>
    <name type="common">Fonseca's lancehead</name>
    <name type="synonym">Rhinocerophis fonsecai</name>
    <dbReference type="NCBI Taxonomy" id="157549"/>
    <lineage>
        <taxon>Eukaryota</taxon>
        <taxon>Metazoa</taxon>
        <taxon>Chordata</taxon>
        <taxon>Craniata</taxon>
        <taxon>Vertebrata</taxon>
        <taxon>Euteleostomi</taxon>
        <taxon>Lepidosauria</taxon>
        <taxon>Squamata</taxon>
        <taxon>Bifurcata</taxon>
        <taxon>Unidentata</taxon>
        <taxon>Episquamata</taxon>
        <taxon>Toxicofera</taxon>
        <taxon>Serpentes</taxon>
        <taxon>Colubroidea</taxon>
        <taxon>Viperidae</taxon>
        <taxon>Crotalinae</taxon>
        <taxon>Bothrops</taxon>
    </lineage>
</organism>
<feature type="peptide" id="PRO_0000421907" description="Bradykinin-potentiating peptide 10d">
    <location>
        <begin position="1"/>
        <end position="10"/>
    </location>
</feature>
<feature type="modified residue" description="Pyrrolidone carboxylic acid" evidence="1">
    <location>
        <position position="1"/>
    </location>
</feature>
<evidence type="ECO:0000269" key="1">
    <source>
    </source>
</evidence>
<evidence type="ECO:0000305" key="2"/>
<proteinExistence type="evidence at protein level"/>
<sequence length="10" mass="1200">QNWPHPPMPP</sequence>
<name>BPPAD_BOTFO</name>